<evidence type="ECO:0000250" key="1"/>
<evidence type="ECO:0000255" key="2"/>
<evidence type="ECO:0000255" key="3">
    <source>
        <dbReference type="PROSITE-ProRule" id="PRU00716"/>
    </source>
</evidence>
<evidence type="ECO:0000305" key="4"/>
<comment type="function">
    <text evidence="1">May mediate the reduction of outer membrane cytochrome b5.</text>
</comment>
<comment type="catalytic activity">
    <reaction>
        <text>2 Fe(III)-[cytochrome b5] + NADH = 2 Fe(II)-[cytochrome b5] + NAD(+) + H(+)</text>
        <dbReference type="Rhea" id="RHEA:46680"/>
        <dbReference type="Rhea" id="RHEA-COMP:10438"/>
        <dbReference type="Rhea" id="RHEA-COMP:10439"/>
        <dbReference type="ChEBI" id="CHEBI:15378"/>
        <dbReference type="ChEBI" id="CHEBI:29033"/>
        <dbReference type="ChEBI" id="CHEBI:29034"/>
        <dbReference type="ChEBI" id="CHEBI:57540"/>
        <dbReference type="ChEBI" id="CHEBI:57945"/>
        <dbReference type="EC" id="1.6.2.2"/>
    </reaction>
</comment>
<comment type="cofactor">
    <cofactor evidence="1">
        <name>FAD</name>
        <dbReference type="ChEBI" id="CHEBI:57692"/>
    </cofactor>
</comment>
<comment type="subcellular location">
    <subcellularLocation>
        <location evidence="1">Mitochondrion outer membrane</location>
        <topology evidence="1">Single-pass membrane protein</topology>
    </subcellularLocation>
</comment>
<comment type="similarity">
    <text evidence="4">Belongs to the flavoprotein pyridine nucleotide cytochrome reductase family.</text>
</comment>
<name>MCR1_KLULA</name>
<gene>
    <name type="primary">MCR1</name>
    <name type="ordered locus">KLLA0D04488g</name>
</gene>
<organism>
    <name type="scientific">Kluyveromyces lactis (strain ATCC 8585 / CBS 2359 / DSM 70799 / NBRC 1267 / NRRL Y-1140 / WM37)</name>
    <name type="common">Yeast</name>
    <name type="synonym">Candida sphaerica</name>
    <dbReference type="NCBI Taxonomy" id="284590"/>
    <lineage>
        <taxon>Eukaryota</taxon>
        <taxon>Fungi</taxon>
        <taxon>Dikarya</taxon>
        <taxon>Ascomycota</taxon>
        <taxon>Saccharomycotina</taxon>
        <taxon>Saccharomycetes</taxon>
        <taxon>Saccharomycetales</taxon>
        <taxon>Saccharomycetaceae</taxon>
        <taxon>Kluyveromyces</taxon>
    </lineage>
</organism>
<keyword id="KW-0274">FAD</keyword>
<keyword id="KW-0285">Flavoprotein</keyword>
<keyword id="KW-0472">Membrane</keyword>
<keyword id="KW-0496">Mitochondrion</keyword>
<keyword id="KW-1000">Mitochondrion outer membrane</keyword>
<keyword id="KW-0520">NAD</keyword>
<keyword id="KW-0560">Oxidoreductase</keyword>
<keyword id="KW-1185">Reference proteome</keyword>
<keyword id="KW-0812">Transmembrane</keyword>
<keyword id="KW-1133">Transmembrane helix</keyword>
<sequence length="296" mass="33013">MFARLSRSNKFLPIALGVGAASIATAIILQRNYSIMNDTSKAFLGDNEWIDLPIIKIEKLSHDTKRFTFALPKKDQVSGLITASCILAKFVTPKGSNVIRPYTPVSDNGTKGKMELVVKHYENGKFTSHLFGLKENDTVSFKGPITKWEWKPNSYDSITLLGAGTGINPLYQLVHHIAENPEDNTKIHLYYGNKTPEDILLKSELDNLQKKYPDQVKITYFVDKAEGNFEGETGFITKDYLSHQAPKPSEKNQVFVCGPPPFMKAYSGPKVSPQDQGELTGILAELGYSKSNVFKF</sequence>
<dbReference type="EC" id="1.6.2.2"/>
<dbReference type="EMBL" id="CR382124">
    <property type="protein sequence ID" value="CAH00358.1"/>
    <property type="molecule type" value="Genomic_DNA"/>
</dbReference>
<dbReference type="RefSeq" id="XP_453262.1">
    <property type="nucleotide sequence ID" value="XM_453262.1"/>
</dbReference>
<dbReference type="SMR" id="Q6CS27"/>
<dbReference type="FunCoup" id="Q6CS27">
    <property type="interactions" value="357"/>
</dbReference>
<dbReference type="STRING" id="284590.Q6CS27"/>
<dbReference type="PaxDb" id="284590-Q6CS27"/>
<dbReference type="KEGG" id="kla:KLLA0_D04488g"/>
<dbReference type="eggNOG" id="KOG0534">
    <property type="taxonomic scope" value="Eukaryota"/>
</dbReference>
<dbReference type="HOGENOM" id="CLU_003827_9_1_1"/>
<dbReference type="InParanoid" id="Q6CS27"/>
<dbReference type="OMA" id="PLIHNMK"/>
<dbReference type="Proteomes" id="UP000000598">
    <property type="component" value="Chromosome D"/>
</dbReference>
<dbReference type="GO" id="GO:0005741">
    <property type="term" value="C:mitochondrial outer membrane"/>
    <property type="evidence" value="ECO:0007669"/>
    <property type="project" value="UniProtKB-SubCell"/>
</dbReference>
<dbReference type="GO" id="GO:0004128">
    <property type="term" value="F:cytochrome-b5 reductase activity, acting on NAD(P)H"/>
    <property type="evidence" value="ECO:0007669"/>
    <property type="project" value="UniProtKB-EC"/>
</dbReference>
<dbReference type="GO" id="GO:0006696">
    <property type="term" value="P:ergosterol biosynthetic process"/>
    <property type="evidence" value="ECO:0007669"/>
    <property type="project" value="TreeGrafter"/>
</dbReference>
<dbReference type="CDD" id="cd06183">
    <property type="entry name" value="cyt_b5_reduct_like"/>
    <property type="match status" value="1"/>
</dbReference>
<dbReference type="FunFam" id="2.40.30.10:FF:000032">
    <property type="entry name" value="NADH-cytochrome b5 reductase"/>
    <property type="match status" value="1"/>
</dbReference>
<dbReference type="FunFam" id="3.40.50.80:FF:000009">
    <property type="entry name" value="NADH-cytochrome b5 reductase"/>
    <property type="match status" value="1"/>
</dbReference>
<dbReference type="Gene3D" id="3.40.50.80">
    <property type="entry name" value="Nucleotide-binding domain of ferredoxin-NADP reductase (FNR) module"/>
    <property type="match status" value="1"/>
</dbReference>
<dbReference type="Gene3D" id="2.40.30.10">
    <property type="entry name" value="Translation factors"/>
    <property type="match status" value="1"/>
</dbReference>
<dbReference type="InterPro" id="IPR001834">
    <property type="entry name" value="CBR-like"/>
</dbReference>
<dbReference type="InterPro" id="IPR008333">
    <property type="entry name" value="Cbr1-like_FAD-bd_dom"/>
</dbReference>
<dbReference type="InterPro" id="IPR017927">
    <property type="entry name" value="FAD-bd_FR_type"/>
</dbReference>
<dbReference type="InterPro" id="IPR001709">
    <property type="entry name" value="Flavoprot_Pyr_Nucl_cyt_Rdtase"/>
</dbReference>
<dbReference type="InterPro" id="IPR039261">
    <property type="entry name" value="FNR_nucleotide-bd"/>
</dbReference>
<dbReference type="InterPro" id="IPR001433">
    <property type="entry name" value="OxRdtase_FAD/NAD-bd"/>
</dbReference>
<dbReference type="InterPro" id="IPR017938">
    <property type="entry name" value="Riboflavin_synthase-like_b-brl"/>
</dbReference>
<dbReference type="PANTHER" id="PTHR19370">
    <property type="entry name" value="NADH-CYTOCHROME B5 REDUCTASE"/>
    <property type="match status" value="1"/>
</dbReference>
<dbReference type="PANTHER" id="PTHR19370:SF171">
    <property type="entry name" value="NADH-CYTOCHROME B5 REDUCTASE 2"/>
    <property type="match status" value="1"/>
</dbReference>
<dbReference type="Pfam" id="PF00970">
    <property type="entry name" value="FAD_binding_6"/>
    <property type="match status" value="1"/>
</dbReference>
<dbReference type="Pfam" id="PF00175">
    <property type="entry name" value="NAD_binding_1"/>
    <property type="match status" value="1"/>
</dbReference>
<dbReference type="PRINTS" id="PR00406">
    <property type="entry name" value="CYTB5RDTASE"/>
</dbReference>
<dbReference type="PRINTS" id="PR00371">
    <property type="entry name" value="FPNCR"/>
</dbReference>
<dbReference type="SUPFAM" id="SSF52343">
    <property type="entry name" value="Ferredoxin reductase-like, C-terminal NADP-linked domain"/>
    <property type="match status" value="1"/>
</dbReference>
<dbReference type="SUPFAM" id="SSF63380">
    <property type="entry name" value="Riboflavin synthase domain-like"/>
    <property type="match status" value="1"/>
</dbReference>
<dbReference type="PROSITE" id="PS51384">
    <property type="entry name" value="FAD_FR"/>
    <property type="match status" value="1"/>
</dbReference>
<reference key="1">
    <citation type="journal article" date="2004" name="Nature">
        <title>Genome evolution in yeasts.</title>
        <authorList>
            <person name="Dujon B."/>
            <person name="Sherman D."/>
            <person name="Fischer G."/>
            <person name="Durrens P."/>
            <person name="Casaregola S."/>
            <person name="Lafontaine I."/>
            <person name="de Montigny J."/>
            <person name="Marck C."/>
            <person name="Neuveglise C."/>
            <person name="Talla E."/>
            <person name="Goffard N."/>
            <person name="Frangeul L."/>
            <person name="Aigle M."/>
            <person name="Anthouard V."/>
            <person name="Babour A."/>
            <person name="Barbe V."/>
            <person name="Barnay S."/>
            <person name="Blanchin S."/>
            <person name="Beckerich J.-M."/>
            <person name="Beyne E."/>
            <person name="Bleykasten C."/>
            <person name="Boisrame A."/>
            <person name="Boyer J."/>
            <person name="Cattolico L."/>
            <person name="Confanioleri F."/>
            <person name="de Daruvar A."/>
            <person name="Despons L."/>
            <person name="Fabre E."/>
            <person name="Fairhead C."/>
            <person name="Ferry-Dumazet H."/>
            <person name="Groppi A."/>
            <person name="Hantraye F."/>
            <person name="Hennequin C."/>
            <person name="Jauniaux N."/>
            <person name="Joyet P."/>
            <person name="Kachouri R."/>
            <person name="Kerrest A."/>
            <person name="Koszul R."/>
            <person name="Lemaire M."/>
            <person name="Lesur I."/>
            <person name="Ma L."/>
            <person name="Muller H."/>
            <person name="Nicaud J.-M."/>
            <person name="Nikolski M."/>
            <person name="Oztas S."/>
            <person name="Ozier-Kalogeropoulos O."/>
            <person name="Pellenz S."/>
            <person name="Potier S."/>
            <person name="Richard G.-F."/>
            <person name="Straub M.-L."/>
            <person name="Suleau A."/>
            <person name="Swennen D."/>
            <person name="Tekaia F."/>
            <person name="Wesolowski-Louvel M."/>
            <person name="Westhof E."/>
            <person name="Wirth B."/>
            <person name="Zeniou-Meyer M."/>
            <person name="Zivanovic Y."/>
            <person name="Bolotin-Fukuhara M."/>
            <person name="Thierry A."/>
            <person name="Bouchier C."/>
            <person name="Caudron B."/>
            <person name="Scarpelli C."/>
            <person name="Gaillardin C."/>
            <person name="Weissenbach J."/>
            <person name="Wincker P."/>
            <person name="Souciet J.-L."/>
        </authorList>
    </citation>
    <scope>NUCLEOTIDE SEQUENCE [LARGE SCALE GENOMIC DNA]</scope>
    <source>
        <strain>ATCC 8585 / CBS 2359 / DSM 70799 / NBRC 1267 / NRRL Y-1140 / WM37</strain>
    </source>
</reference>
<feature type="chain" id="PRO_0000330182" description="NADH-cytochrome b5 reductase 2">
    <location>
        <begin position="1"/>
        <end position="296"/>
    </location>
</feature>
<feature type="transmembrane region" description="Helical" evidence="2">
    <location>
        <begin position="12"/>
        <end position="29"/>
    </location>
</feature>
<feature type="domain" description="FAD-binding FR-type" evidence="3">
    <location>
        <begin position="47"/>
        <end position="151"/>
    </location>
</feature>
<feature type="binding site" evidence="1">
    <location>
        <begin position="154"/>
        <end position="189"/>
    </location>
    <ligand>
        <name>FAD</name>
        <dbReference type="ChEBI" id="CHEBI:57692"/>
    </ligand>
</feature>
<protein>
    <recommendedName>
        <fullName>NADH-cytochrome b5 reductase 2</fullName>
        <ecNumber>1.6.2.2</ecNumber>
    </recommendedName>
    <alternativeName>
        <fullName>Mitochondrial cytochrome b reductase</fullName>
    </alternativeName>
</protein>
<proteinExistence type="inferred from homology"/>
<accession>Q6CS27</accession>